<gene>
    <name evidence="1" type="primary">ndhB</name>
</gene>
<comment type="function">
    <text evidence="1">NDH shuttles electrons from NAD(P)H:plastoquinone, via FMN and iron-sulfur (Fe-S) centers, to quinones in the photosynthetic chain and possibly in a chloroplast respiratory chain. The immediate electron acceptor for the enzyme in this species is believed to be plastoquinone. Couples the redox reaction to proton translocation, and thus conserves the redox energy in a proton gradient.</text>
</comment>
<comment type="catalytic activity">
    <reaction evidence="1">
        <text>a plastoquinone + NADH + (n+1) H(+)(in) = a plastoquinol + NAD(+) + n H(+)(out)</text>
        <dbReference type="Rhea" id="RHEA:42608"/>
        <dbReference type="Rhea" id="RHEA-COMP:9561"/>
        <dbReference type="Rhea" id="RHEA-COMP:9562"/>
        <dbReference type="ChEBI" id="CHEBI:15378"/>
        <dbReference type="ChEBI" id="CHEBI:17757"/>
        <dbReference type="ChEBI" id="CHEBI:57540"/>
        <dbReference type="ChEBI" id="CHEBI:57945"/>
        <dbReference type="ChEBI" id="CHEBI:62192"/>
    </reaction>
</comment>
<comment type="catalytic activity">
    <reaction evidence="1">
        <text>a plastoquinone + NADPH + (n+1) H(+)(in) = a plastoquinol + NADP(+) + n H(+)(out)</text>
        <dbReference type="Rhea" id="RHEA:42612"/>
        <dbReference type="Rhea" id="RHEA-COMP:9561"/>
        <dbReference type="Rhea" id="RHEA-COMP:9562"/>
        <dbReference type="ChEBI" id="CHEBI:15378"/>
        <dbReference type="ChEBI" id="CHEBI:17757"/>
        <dbReference type="ChEBI" id="CHEBI:57783"/>
        <dbReference type="ChEBI" id="CHEBI:58349"/>
        <dbReference type="ChEBI" id="CHEBI:62192"/>
    </reaction>
</comment>
<comment type="subunit">
    <text evidence="1">NDH is composed of at least 16 different subunits, 5 of which are encoded in the nucleus.</text>
</comment>
<comment type="subcellular location">
    <subcellularLocation>
        <location evidence="1">Plastid</location>
        <location evidence="1">Chloroplast thylakoid membrane</location>
        <topology evidence="1">Multi-pass membrane protein</topology>
    </subcellularLocation>
</comment>
<comment type="similarity">
    <text evidence="1">Belongs to the complex I subunit 2 family.</text>
</comment>
<organism>
    <name type="scientific">Nephroselmis olivacea</name>
    <name type="common">Green alga</name>
    <dbReference type="NCBI Taxonomy" id="31312"/>
    <lineage>
        <taxon>Eukaryota</taxon>
        <taxon>Viridiplantae</taxon>
        <taxon>Chlorophyta</taxon>
        <taxon>Nephroselmidophyceae</taxon>
        <taxon>Nephroselmidales</taxon>
        <taxon>Nephroselmidaceae</taxon>
        <taxon>Nephroselmis</taxon>
    </lineage>
</organism>
<reference key="1">
    <citation type="journal article" date="1999" name="Proc. Natl. Acad. Sci. U.S.A.">
        <title>The complete chloroplast DNA sequence of the green alga Nephroselmis olivacea: insights into the architecture of ancestral chloroplast genomes.</title>
        <authorList>
            <person name="Turmel M."/>
            <person name="Otis C."/>
            <person name="Lemieux C."/>
        </authorList>
    </citation>
    <scope>NUCLEOTIDE SEQUENCE [LARGE SCALE GENOMIC DNA]</scope>
    <source>
        <strain>NIES-484 / S-N-5-8</strain>
    </source>
</reference>
<sequence>MELSDILASFHASNLIPEGIVACTILLVLLLDLVYSRTCHAWLAWVAMAGLSLASVLLGQQWYQLMNLPTATMTFGGSFQADSLSLVFRAIIAMSCVLCILLSIDYVESTGTAPSEFLVLIATASLGGMLVAGSNDLLMMFVSLETLGLASYLLTGYMKRDVRSNEASLKYLLVGAASSGLFLYGISWMYGISGGHMELNSIAHAIVSLDETKTTTCALALVLMTVGVGFKVAAAPFHQWTPDVYQGSPTPVVAFLSVGSKAAGFILAVRMCTTLFPSFNTEWHLIFTILSILSMIVGNFIAVTQTSLKRMLGYSSVGQAGVMMIGMLTDSPDGYASLIVYLLIYLFMNLGAFACVILFGLRTGTDQIQDYSGLLARDPFLALCLSLCLLSLGGIPPLAGFFGKMYLFLAAWDAGQYSLVWVGLITSVVSIYYYLSVVKIMLVPATQEMSLAVREYPRRAWSLEPIQPLEVGIFVCVLGSILVGVAGNSMVNLMTITMSQAPSLGV</sequence>
<feature type="chain" id="PRO_0000117668" description="NAD(P)H-quinone oxidoreductase subunit 2, chloroplastic">
    <location>
        <begin position="1"/>
        <end position="506"/>
    </location>
</feature>
<feature type="transmembrane region" description="Helical" evidence="1">
    <location>
        <begin position="15"/>
        <end position="35"/>
    </location>
</feature>
<feature type="transmembrane region" description="Helical" evidence="1">
    <location>
        <begin position="39"/>
        <end position="59"/>
    </location>
</feature>
<feature type="transmembrane region" description="Helical" evidence="1">
    <location>
        <begin position="84"/>
        <end position="104"/>
    </location>
</feature>
<feature type="transmembrane region" description="Helical" evidence="1">
    <location>
        <begin position="113"/>
        <end position="133"/>
    </location>
</feature>
<feature type="transmembrane region" description="Helical" evidence="1">
    <location>
        <begin position="137"/>
        <end position="157"/>
    </location>
</feature>
<feature type="transmembrane region" description="Helical" evidence="1">
    <location>
        <begin position="172"/>
        <end position="192"/>
    </location>
</feature>
<feature type="transmembrane region" description="Helical" evidence="1">
    <location>
        <begin position="217"/>
        <end position="237"/>
    </location>
</feature>
<feature type="transmembrane region" description="Helical" evidence="1">
    <location>
        <begin position="249"/>
        <end position="269"/>
    </location>
</feature>
<feature type="transmembrane region" description="Helical" evidence="1">
    <location>
        <begin position="283"/>
        <end position="303"/>
    </location>
</feature>
<feature type="transmembrane region" description="Helical" evidence="1">
    <location>
        <begin position="339"/>
        <end position="359"/>
    </location>
</feature>
<feature type="transmembrane region" description="Helical" evidence="1">
    <location>
        <begin position="382"/>
        <end position="402"/>
    </location>
</feature>
<feature type="transmembrane region" description="Helical" evidence="1">
    <location>
        <begin position="418"/>
        <end position="438"/>
    </location>
</feature>
<feature type="transmembrane region" description="Helical" evidence="1">
    <location>
        <begin position="471"/>
        <end position="491"/>
    </location>
</feature>
<geneLocation type="chloroplast"/>
<keyword id="KW-0150">Chloroplast</keyword>
<keyword id="KW-0472">Membrane</keyword>
<keyword id="KW-0520">NAD</keyword>
<keyword id="KW-0521">NADP</keyword>
<keyword id="KW-0934">Plastid</keyword>
<keyword id="KW-0618">Plastoquinone</keyword>
<keyword id="KW-0874">Quinone</keyword>
<keyword id="KW-0793">Thylakoid</keyword>
<keyword id="KW-1278">Translocase</keyword>
<keyword id="KW-0812">Transmembrane</keyword>
<keyword id="KW-1133">Transmembrane helix</keyword>
<keyword id="KW-0813">Transport</keyword>
<accession>Q9TL07</accession>
<name>NU2C_NEPOL</name>
<evidence type="ECO:0000255" key="1">
    <source>
        <dbReference type="HAMAP-Rule" id="MF_00445"/>
    </source>
</evidence>
<protein>
    <recommendedName>
        <fullName evidence="1">NAD(P)H-quinone oxidoreductase subunit 2, chloroplastic</fullName>
        <ecNumber evidence="1">7.1.1.-</ecNumber>
    </recommendedName>
    <alternativeName>
        <fullName evidence="1">NAD(P)H dehydrogenase, subunit 2</fullName>
    </alternativeName>
    <alternativeName>
        <fullName evidence="1">NADH-plastoquinone oxidoreductase subunit 2</fullName>
    </alternativeName>
</protein>
<proteinExistence type="inferred from homology"/>
<dbReference type="EC" id="7.1.1.-" evidence="1"/>
<dbReference type="EMBL" id="AF137379">
    <property type="protein sequence ID" value="AAD54809.1"/>
    <property type="molecule type" value="Genomic_DNA"/>
</dbReference>
<dbReference type="RefSeq" id="NP_050838.1">
    <property type="nucleotide sequence ID" value="NC_000927.1"/>
</dbReference>
<dbReference type="SMR" id="Q9TL07"/>
<dbReference type="GeneID" id="801968"/>
<dbReference type="GO" id="GO:0009535">
    <property type="term" value="C:chloroplast thylakoid membrane"/>
    <property type="evidence" value="ECO:0007669"/>
    <property type="project" value="UniProtKB-SubCell"/>
</dbReference>
<dbReference type="GO" id="GO:0008137">
    <property type="term" value="F:NADH dehydrogenase (ubiquinone) activity"/>
    <property type="evidence" value="ECO:0007669"/>
    <property type="project" value="InterPro"/>
</dbReference>
<dbReference type="GO" id="GO:0048038">
    <property type="term" value="F:quinone binding"/>
    <property type="evidence" value="ECO:0007669"/>
    <property type="project" value="UniProtKB-KW"/>
</dbReference>
<dbReference type="GO" id="GO:0042773">
    <property type="term" value="P:ATP synthesis coupled electron transport"/>
    <property type="evidence" value="ECO:0007669"/>
    <property type="project" value="InterPro"/>
</dbReference>
<dbReference type="GO" id="GO:0019684">
    <property type="term" value="P:photosynthesis, light reaction"/>
    <property type="evidence" value="ECO:0007669"/>
    <property type="project" value="UniProtKB-UniRule"/>
</dbReference>
<dbReference type="HAMAP" id="MF_00445">
    <property type="entry name" value="NDH1_NuoN_1"/>
    <property type="match status" value="1"/>
</dbReference>
<dbReference type="InterPro" id="IPR010096">
    <property type="entry name" value="NADH-Q_OxRdtase_suN/2"/>
</dbReference>
<dbReference type="InterPro" id="IPR001750">
    <property type="entry name" value="ND/Mrp_TM"/>
</dbReference>
<dbReference type="InterPro" id="IPR045693">
    <property type="entry name" value="Ndh2_N"/>
</dbReference>
<dbReference type="NCBIfam" id="TIGR01770">
    <property type="entry name" value="NDH_I_N"/>
    <property type="match status" value="1"/>
</dbReference>
<dbReference type="NCBIfam" id="NF002701">
    <property type="entry name" value="PRK02504.1"/>
    <property type="match status" value="1"/>
</dbReference>
<dbReference type="PANTHER" id="PTHR22773">
    <property type="entry name" value="NADH DEHYDROGENASE"/>
    <property type="match status" value="1"/>
</dbReference>
<dbReference type="Pfam" id="PF19530">
    <property type="entry name" value="Ndh2_N"/>
    <property type="match status" value="1"/>
</dbReference>
<dbReference type="Pfam" id="PF00361">
    <property type="entry name" value="Proton_antipo_M"/>
    <property type="match status" value="1"/>
</dbReference>